<evidence type="ECO:0000250" key="1">
    <source>
        <dbReference type="UniProtKB" id="P23882"/>
    </source>
</evidence>
<evidence type="ECO:0000305" key="2"/>
<reference key="1">
    <citation type="submission" date="1997-05" db="EMBL/GenBank/DDBJ databases">
        <title>Rearrangement of the rRNA genes in Rickettsia preceeded the divergence of the typhus and the spotted fever group Rickettsia.</title>
        <authorList>
            <person name="Andersson S.G.E."/>
            <person name="Stothard D.R."/>
            <person name="Romedenne M."/>
            <person name="Viseur N."/>
            <person name="Fuerst P."/>
            <person name="Kurland C.G."/>
        </authorList>
    </citation>
    <scope>NUCLEOTIDE SEQUENCE [GENOMIC DNA]</scope>
</reference>
<keyword id="KW-0648">Protein biosynthesis</keyword>
<keyword id="KW-0808">Transferase</keyword>
<organism>
    <name type="scientific">Rickettsia parkeri</name>
    <dbReference type="NCBI Taxonomy" id="35792"/>
    <lineage>
        <taxon>Bacteria</taxon>
        <taxon>Pseudomonadati</taxon>
        <taxon>Pseudomonadota</taxon>
        <taxon>Alphaproteobacteria</taxon>
        <taxon>Rickettsiales</taxon>
        <taxon>Rickettsiaceae</taxon>
        <taxon>Rickettsieae</taxon>
        <taxon>Rickettsia</taxon>
        <taxon>spotted fever group</taxon>
    </lineage>
</organism>
<gene>
    <name type="primary">fmt</name>
</gene>
<protein>
    <recommendedName>
        <fullName evidence="1">Methionyl-tRNA formyltransferase</fullName>
        <ecNumber evidence="1">2.1.2.9</ecNumber>
    </recommendedName>
</protein>
<name>FMT_RICPA</name>
<dbReference type="EC" id="2.1.2.9" evidence="1"/>
<dbReference type="EMBL" id="Y13123">
    <property type="protein sequence ID" value="CAA73590.1"/>
    <property type="molecule type" value="Genomic_DNA"/>
</dbReference>
<dbReference type="SMR" id="O33543"/>
<dbReference type="GO" id="GO:0004479">
    <property type="term" value="F:methionyl-tRNA formyltransferase activity"/>
    <property type="evidence" value="ECO:0007669"/>
    <property type="project" value="UniProtKB-EC"/>
</dbReference>
<dbReference type="CDD" id="cd08704">
    <property type="entry name" value="Met_tRNA_FMT_C"/>
    <property type="match status" value="1"/>
</dbReference>
<dbReference type="Gene3D" id="3.10.25.10">
    <property type="entry name" value="Formyl transferase, C-terminal domain"/>
    <property type="match status" value="1"/>
</dbReference>
<dbReference type="InterPro" id="IPR005793">
    <property type="entry name" value="Formyl_trans_C"/>
</dbReference>
<dbReference type="InterPro" id="IPR037022">
    <property type="entry name" value="Formyl_trans_C_sf"/>
</dbReference>
<dbReference type="InterPro" id="IPR011034">
    <property type="entry name" value="Formyl_transferase-like_C_sf"/>
</dbReference>
<dbReference type="InterPro" id="IPR044135">
    <property type="entry name" value="Met-tRNA-FMT_C"/>
</dbReference>
<dbReference type="Pfam" id="PF02911">
    <property type="entry name" value="Formyl_trans_C"/>
    <property type="match status" value="1"/>
</dbReference>
<dbReference type="SUPFAM" id="SSF50486">
    <property type="entry name" value="FMT C-terminal domain-like"/>
    <property type="match status" value="1"/>
</dbReference>
<comment type="function">
    <text evidence="1">Attaches a formyl group to the free amino group of methionyl-tRNA(fMet). The formyl group appears to play a dual role in the initiator identity of N-formylmethionyl-tRNA by promoting its recognition by IF2 and preventing the misappropriation of this tRNA by the elongation apparatus.</text>
</comment>
<comment type="catalytic activity">
    <reaction evidence="1">
        <text>L-methionyl-tRNA(fMet) + (6R)-10-formyltetrahydrofolate = N-formyl-L-methionyl-tRNA(fMet) + (6S)-5,6,7,8-tetrahydrofolate + H(+)</text>
        <dbReference type="Rhea" id="RHEA:24380"/>
        <dbReference type="Rhea" id="RHEA-COMP:9952"/>
        <dbReference type="Rhea" id="RHEA-COMP:9953"/>
        <dbReference type="ChEBI" id="CHEBI:15378"/>
        <dbReference type="ChEBI" id="CHEBI:57453"/>
        <dbReference type="ChEBI" id="CHEBI:78530"/>
        <dbReference type="ChEBI" id="CHEBI:78844"/>
        <dbReference type="ChEBI" id="CHEBI:195366"/>
        <dbReference type="EC" id="2.1.2.9"/>
    </reaction>
</comment>
<comment type="similarity">
    <text evidence="2">Belongs to the Fmt family.</text>
</comment>
<sequence>YFSYNDKIIKILEAEYLNADHHFTSGTVISDKLEIACGSGILRVKKLQQESKKALNIEEFLRGTNILKDTVLK</sequence>
<proteinExistence type="inferred from homology"/>
<accession>O33543</accession>
<feature type="chain" id="PRO_0000083032" description="Methionyl-tRNA formyltransferase">
    <location>
        <begin position="1" status="less than"/>
        <end position="73"/>
    </location>
</feature>
<feature type="non-terminal residue">
    <location>
        <position position="1"/>
    </location>
</feature>